<organism>
    <name type="scientific">Corynebacterium glutamicum (strain ATCC 13032 / DSM 20300 / JCM 1318 / BCRC 11384 / CCUG 27702 / LMG 3730 / NBRC 12168 / NCIMB 10025 / NRRL B-2784 / 534)</name>
    <dbReference type="NCBI Taxonomy" id="196627"/>
    <lineage>
        <taxon>Bacteria</taxon>
        <taxon>Bacillati</taxon>
        <taxon>Actinomycetota</taxon>
        <taxon>Actinomycetes</taxon>
        <taxon>Mycobacteriales</taxon>
        <taxon>Corynebacteriaceae</taxon>
        <taxon>Corynebacterium</taxon>
    </lineage>
</organism>
<dbReference type="EC" id="2.5.1.49" evidence="2 3 4 5"/>
<dbReference type="EMBL" id="BA000036">
    <property type="protein sequence ID" value="BAB98046.1"/>
    <property type="molecule type" value="Genomic_DNA"/>
</dbReference>
<dbReference type="RefSeq" id="NP_599886.1">
    <property type="nucleotide sequence ID" value="NC_003450.3"/>
</dbReference>
<dbReference type="RefSeq" id="WP_003854667.1">
    <property type="nucleotide sequence ID" value="NC_006958.1"/>
</dbReference>
<dbReference type="SMR" id="Q79VI4"/>
<dbReference type="STRING" id="196627.cg0755"/>
<dbReference type="KEGG" id="cgb:cg0755"/>
<dbReference type="KEGG" id="cgl:Cgl0653"/>
<dbReference type="PATRIC" id="fig|196627.13.peg.639"/>
<dbReference type="eggNOG" id="COG2873">
    <property type="taxonomic scope" value="Bacteria"/>
</dbReference>
<dbReference type="HOGENOM" id="CLU_018986_4_0_11"/>
<dbReference type="OrthoDB" id="9780685at2"/>
<dbReference type="BioCyc" id="CORYNE:G18NG-10215-MONOMER"/>
<dbReference type="BioCyc" id="MetaCyc:G18NG-10215-MONOMER"/>
<dbReference type="UniPathway" id="UPA00051">
    <property type="reaction ID" value="UER00079"/>
</dbReference>
<dbReference type="Proteomes" id="UP000000582">
    <property type="component" value="Chromosome"/>
</dbReference>
<dbReference type="GO" id="GO:0005737">
    <property type="term" value="C:cytoplasm"/>
    <property type="evidence" value="ECO:0007669"/>
    <property type="project" value="TreeGrafter"/>
</dbReference>
<dbReference type="GO" id="GO:0004124">
    <property type="term" value="F:cysteine synthase activity"/>
    <property type="evidence" value="ECO:0007669"/>
    <property type="project" value="TreeGrafter"/>
</dbReference>
<dbReference type="GO" id="GO:0051009">
    <property type="term" value="F:O-acetylhomoserine sulfhydrylase activity"/>
    <property type="evidence" value="ECO:0007669"/>
    <property type="project" value="RHEA"/>
</dbReference>
<dbReference type="GO" id="GO:0030170">
    <property type="term" value="F:pyridoxal phosphate binding"/>
    <property type="evidence" value="ECO:0007669"/>
    <property type="project" value="InterPro"/>
</dbReference>
<dbReference type="GO" id="GO:0006535">
    <property type="term" value="P:cysteine biosynthetic process from serine"/>
    <property type="evidence" value="ECO:0007669"/>
    <property type="project" value="TreeGrafter"/>
</dbReference>
<dbReference type="GO" id="GO:0071269">
    <property type="term" value="P:L-homocysteine biosynthetic process"/>
    <property type="evidence" value="ECO:0007669"/>
    <property type="project" value="TreeGrafter"/>
</dbReference>
<dbReference type="GO" id="GO:0019346">
    <property type="term" value="P:transsulfuration"/>
    <property type="evidence" value="ECO:0007669"/>
    <property type="project" value="InterPro"/>
</dbReference>
<dbReference type="CDD" id="cd00614">
    <property type="entry name" value="CGS_like"/>
    <property type="match status" value="1"/>
</dbReference>
<dbReference type="FunFam" id="3.40.640.10:FF:000035">
    <property type="entry name" value="O-succinylhomoserine sulfhydrylase"/>
    <property type="match status" value="1"/>
</dbReference>
<dbReference type="Gene3D" id="3.90.1150.10">
    <property type="entry name" value="Aspartate Aminotransferase, domain 1"/>
    <property type="match status" value="1"/>
</dbReference>
<dbReference type="Gene3D" id="3.40.640.10">
    <property type="entry name" value="Type I PLP-dependent aspartate aminotransferase-like (Major domain)"/>
    <property type="match status" value="1"/>
</dbReference>
<dbReference type="InterPro" id="IPR000277">
    <property type="entry name" value="Cys/Met-Metab_PyrdxlP-dep_enz"/>
</dbReference>
<dbReference type="InterPro" id="IPR006235">
    <property type="entry name" value="OAc-hSer/O-AcSer_sulfhydrylase"/>
</dbReference>
<dbReference type="InterPro" id="IPR015424">
    <property type="entry name" value="PyrdxlP-dep_Trfase"/>
</dbReference>
<dbReference type="InterPro" id="IPR015421">
    <property type="entry name" value="PyrdxlP-dep_Trfase_major"/>
</dbReference>
<dbReference type="InterPro" id="IPR015422">
    <property type="entry name" value="PyrdxlP-dep_Trfase_small"/>
</dbReference>
<dbReference type="NCBIfam" id="TIGR01326">
    <property type="entry name" value="OAH_OAS_sulfhy"/>
    <property type="match status" value="1"/>
</dbReference>
<dbReference type="NCBIfam" id="NF004125">
    <property type="entry name" value="PRK05613.1"/>
    <property type="match status" value="1"/>
</dbReference>
<dbReference type="PANTHER" id="PTHR43797">
    <property type="entry name" value="HOMOCYSTEINE/CYSTEINE SYNTHASE"/>
    <property type="match status" value="1"/>
</dbReference>
<dbReference type="PANTHER" id="PTHR43797:SF2">
    <property type="entry name" value="HOMOCYSTEINE_CYSTEINE SYNTHASE"/>
    <property type="match status" value="1"/>
</dbReference>
<dbReference type="Pfam" id="PF01053">
    <property type="entry name" value="Cys_Met_Meta_PP"/>
    <property type="match status" value="1"/>
</dbReference>
<dbReference type="PIRSF" id="PIRSF001434">
    <property type="entry name" value="CGS"/>
    <property type="match status" value="1"/>
</dbReference>
<dbReference type="SUPFAM" id="SSF53383">
    <property type="entry name" value="PLP-dependent transferases"/>
    <property type="match status" value="1"/>
</dbReference>
<accession>Q79VI4</accession>
<accession>Q93GI1</accession>
<protein>
    <recommendedName>
        <fullName evidence="7">O-acetyl-L-homoserine sulfhydrylase</fullName>
        <shortName evidence="7">OAH-sulfhydrylase</shortName>
        <ecNumber evidence="2 3 4 5">2.5.1.49</ecNumber>
    </recommendedName>
</protein>
<proteinExistence type="evidence at protein level"/>
<sequence>MPKYDNSNADQWGFETRSIHAGQSVDAQTSARNLPIYQSTAFVFDSAEHAKQRFALEDLGPVYSRLTNPTVEALENRIASLEGGVHAVAFSSGQAATTNAILNLAGAGDHIVTSPRLYGGTETLFLITLNRLGIDVSFVENPDDPESWQAAVQPNTKAFFGETFANPQADVLDIPAVAEVAHRNSVPLIIDNTIATAALVRPLELGADVVVASLTKFYTGNGSGLGGVLIDGGKFDWTVEKDGKPVFPYFVTPDAAYHGLKYADLGAPAFGLKVRVGLLRDTGSTLSAFNAWAAVQGIDTLSLRLERHNENAIKVAEFLNNHEKVEKVNFAGLKDSPWYATKEKLGLKYTGSVLTFEIKGGKDEAWAFIDALKLHSNLANIGDVRSLVVHPATTTHSQSDEAGLARAGVTQSTVRLSVGIETIDDIIADLEGGFAAI</sequence>
<feature type="chain" id="PRO_0000445418" description="O-acetyl-L-homoserine sulfhydrylase">
    <location>
        <begin position="1"/>
        <end position="437"/>
    </location>
</feature>
<feature type="modified residue" description="N6-(pyridoxal phosphate)lysine" evidence="1">
    <location>
        <position position="216"/>
    </location>
</feature>
<comment type="function">
    <text evidence="2 3 4 5">Catalyzes the conversion of O-acetyl-L-homoserine (OAH) into homocysteine in the methionine biosynthesis pathway (PubMed:11844756, PubMed:18050920, Ref.4). Can also use dimethyldisulfide and methanethiol as reduced sulfur sources, leading to the direct formation of methionine (PubMed:20798582). Has weak cystathionine gamma-synthase activity (PubMed:18050920).</text>
</comment>
<comment type="catalytic activity">
    <reaction evidence="2 3 5">
        <text>O-acetyl-L-homoserine + hydrogen sulfide = L-homocysteine + acetate</text>
        <dbReference type="Rhea" id="RHEA:27822"/>
        <dbReference type="ChEBI" id="CHEBI:29919"/>
        <dbReference type="ChEBI" id="CHEBI:30089"/>
        <dbReference type="ChEBI" id="CHEBI:57716"/>
        <dbReference type="ChEBI" id="CHEBI:58199"/>
        <dbReference type="EC" id="2.5.1.49"/>
    </reaction>
</comment>
<comment type="catalytic activity">
    <reaction evidence="4">
        <text>O-acetyl-L-homoserine + methanethiol = L-methionine + acetate + H(+)</text>
        <dbReference type="Rhea" id="RHEA:10048"/>
        <dbReference type="ChEBI" id="CHEBI:15378"/>
        <dbReference type="ChEBI" id="CHEBI:16007"/>
        <dbReference type="ChEBI" id="CHEBI:30089"/>
        <dbReference type="ChEBI" id="CHEBI:57716"/>
        <dbReference type="ChEBI" id="CHEBI:57844"/>
        <dbReference type="EC" id="2.5.1.49"/>
    </reaction>
</comment>
<comment type="cofactor">
    <cofactor evidence="1">
        <name>pyridoxal 5'-phosphate</name>
        <dbReference type="ChEBI" id="CHEBI:597326"/>
    </cofactor>
</comment>
<comment type="activity regulation">
    <text evidence="3 5">Inhibited by methionine and cystathionine.</text>
</comment>
<comment type="biophysicochemical properties">
    <kinetics>
        <KM evidence="3">6.4 mM for O-acetyl-L-homoserine</KM>
        <KM evidence="3">8.6 mM for Na(2)S</KM>
        <Vmax evidence="3">6.0 umol/min/mg enzyme toward O-acetyl-L-homoserine for the O-acetyl-L-homoserine sulfhydrylase activity</Vmax>
        <Vmax evidence="3">8.0 umol/min/mg enzyme toward Na(2)S</Vmax>
        <Vmax evidence="3">1.5 umol/min/mg enzyme toward O-acetyl-L-homoserine for the cystathionine gamma-synthase activity</Vmax>
        <text evidence="3">kcat is 28.0 sec(-1) with O-acetyl-L-homoserine as substrate for the O-acetyl-L-homoserine sulfhydrylase activity. kcat is 37.3 sec(-1) with Na(2)S as substrate. kcat is 7.0 sec(-1) with O-acetyl-L-homoserine as substrate for the cystathionine gamma-synthase activity.</text>
    </kinetics>
    <phDependence>
        <text evidence="3">Optimum pH is 7.0.</text>
    </phDependence>
    <temperatureDependence>
        <text evidence="3">Optimum temperature is 37-42 degrees Celsius.</text>
    </temperatureDependence>
</comment>
<comment type="pathway">
    <text evidence="2">Amino-acid biosynthesis; L-methionine biosynthesis via de novo pathway; L-homocysteine from O-acetyl-L-homoserine: step 1/1.</text>
</comment>
<comment type="subunit">
    <text evidence="3">Homohexamer.</text>
</comment>
<comment type="developmental stage">
    <text evidence="5">Activity is maximal during the early stationary phase.</text>
</comment>
<comment type="induction">
    <text evidence="2 5">Expression is repressed by methionine.</text>
</comment>
<comment type="disruption phenotype">
    <text evidence="2 4">Disruption of the metY gene is not enough to lead to methionine auxotrophy, but the metB-metY double mutant is unable to grow on a minimal medium lacking supplemental methionine (PubMed:11844756). Deletion of the gene results in methionine auxotrophy on methanethiol or dimethyldisulfide as sole sulfur source (PubMed:20798582).</text>
</comment>
<comment type="similarity">
    <text evidence="7">Belongs to the trans-sulfuration enzymes family.</text>
</comment>
<reference key="1">
    <citation type="journal article" date="2003" name="Appl. Microbiol. Biotechnol.">
        <title>The Corynebacterium glutamicum genome: features and impacts on biotechnological processes.</title>
        <authorList>
            <person name="Ikeda M."/>
            <person name="Nakagawa S."/>
        </authorList>
    </citation>
    <scope>NUCLEOTIDE SEQUENCE [LARGE SCALE GENOMIC DNA]</scope>
    <source>
        <strain>ATCC 13032 / DSM 20300 / JCM 1318 / BCRC 11384 / CCUG 27702 / LMG 3730 / NBRC 12168 / NCIMB 10025 / NRRL B-2784 / 534</strain>
    </source>
</reference>
<reference key="2">
    <citation type="journal article" date="2007" name="J. Microbiol. Biotechnol.">
        <title>Biochemical analysis on the parallel pathways of methionine biosynthesis in Corynebacterium glutamicum.</title>
        <authorList>
            <person name="Hwang B.J."/>
            <person name="Park S.D."/>
            <person name="Kim Y."/>
            <person name="Kim P."/>
            <person name="Lee H.S."/>
        </authorList>
    </citation>
    <scope>PROTEIN SEQUENCE OF 1-7</scope>
    <scope>FUNCTION</scope>
    <scope>CATALYTIC ACTIVITY</scope>
    <scope>ACTIVITY REGULATION</scope>
    <scope>BIOPHYSICOCHEMICAL PROPERTIES</scope>
    <scope>SUBUNIT</scope>
    <source>
        <strain>ATCC 13059 / LMG 3658 / NCIB 10332 / AS019 / 613</strain>
    </source>
</reference>
<reference key="3">
    <citation type="journal article" date="2002" name="J. Bacteriol.">
        <title>Corynebacterium glutamicum utilizes both transsulfuration and direct sulfhydrylation pathways for methionine biosynthesis.</title>
        <authorList>
            <person name="Hwang B.J."/>
            <person name="Yeom H.J."/>
            <person name="Kim Y."/>
            <person name="Lee H.S."/>
        </authorList>
    </citation>
    <scope>FUNCTION</scope>
    <scope>CATALYTIC ACTIVITY</scope>
    <scope>PATHWAY</scope>
    <scope>INDUCTION</scope>
    <scope>DISRUPTION PHENOTYPE</scope>
    <source>
        <strain>ATCC 13059 / LMG 3658 / NCIB 10332 / AS019 / 613</strain>
    </source>
</reference>
<reference key="4">
    <citation type="journal article" date="2004" name="J. Microbiol. Biotechnol.">
        <title>Regulation of enzymes involved in methionine biosynthesis in Corynebacterium glutamicum.</title>
        <authorList>
            <person name="Yeom H.J."/>
            <person name="Hwang B.J."/>
            <person name="Lee M.S."/>
            <person name="Kim Y."/>
            <person name="Lee H.S."/>
        </authorList>
    </citation>
    <scope>FUNCTION</scope>
    <scope>CATALYTIC ACTIVITY</scope>
    <scope>ACTIVITY REGULATION</scope>
    <scope>DEVELOPMENTAL STAGE</scope>
    <scope>INDUCTION</scope>
    <source>
        <strain>ATCC 13059 / LMG 3658 / NCIB 10332 / AS019 / 613</strain>
    </source>
</reference>
<reference key="5">
    <citation type="journal article" date="2010" name="J. Microbiol. Biotechnol.">
        <title>Towards methionine overproduction in Corynebacterium glutamicum-- methanethiol and dimethyldisulfide as reduced sulfur sources.</title>
        <authorList>
            <person name="Bolten C.J."/>
            <person name="Schroeder H."/>
            <person name="Dickschat J."/>
            <person name="Wittmann C."/>
        </authorList>
    </citation>
    <scope>FUNCTION</scope>
    <scope>CATALYTIC ACTIVITY</scope>
    <scope>DISRUPTION PHENOTYPE</scope>
    <source>
        <strain>ATCC 13032 / DSM 20300 / JCM 1318 / BCRC 11384 / CCUG 27702 / LMG 3730 / NBRC 12168 / NCIMB 10025 / NRRL B-2784 / 534</strain>
    </source>
</reference>
<keyword id="KW-0028">Amino-acid biosynthesis</keyword>
<keyword id="KW-0903">Direct protein sequencing</keyword>
<keyword id="KW-0486">Methionine biosynthesis</keyword>
<keyword id="KW-0663">Pyridoxal phosphate</keyword>
<keyword id="KW-1185">Reference proteome</keyword>
<keyword id="KW-0808">Transferase</keyword>
<evidence type="ECO:0000250" key="1">
    <source>
        <dbReference type="UniProtKB" id="Q5SK88"/>
    </source>
</evidence>
<evidence type="ECO:0000269" key="2">
    <source>
    </source>
</evidence>
<evidence type="ECO:0000269" key="3">
    <source>
    </source>
</evidence>
<evidence type="ECO:0000269" key="4">
    <source>
    </source>
</evidence>
<evidence type="ECO:0000269" key="5">
    <source ref="4"/>
</evidence>
<evidence type="ECO:0000303" key="6">
    <source>
    </source>
</evidence>
<evidence type="ECO:0000305" key="7"/>
<evidence type="ECO:0000312" key="8">
    <source>
        <dbReference type="EMBL" id="BAB98046.1"/>
    </source>
</evidence>
<gene>
    <name evidence="6" type="primary">metY</name>
    <name evidence="8" type="ordered locus">Cgl0653</name>
</gene>
<name>METY_CORGL</name>